<keyword id="KW-0489">Methyltransferase</keyword>
<keyword id="KW-1185">Reference proteome</keyword>
<keyword id="KW-0949">S-adenosyl-L-methionine</keyword>
<keyword id="KW-0808">Transferase</keyword>
<keyword id="KW-0819">tRNA processing</keyword>
<proteinExistence type="inferred from homology"/>
<organism>
    <name type="scientific">Cronobacter sakazakii (strain ATCC BAA-894)</name>
    <name type="common">Enterobacter sakazakii</name>
    <dbReference type="NCBI Taxonomy" id="290339"/>
    <lineage>
        <taxon>Bacteria</taxon>
        <taxon>Pseudomonadati</taxon>
        <taxon>Pseudomonadota</taxon>
        <taxon>Gammaproteobacteria</taxon>
        <taxon>Enterobacterales</taxon>
        <taxon>Enterobacteriaceae</taxon>
        <taxon>Cronobacter</taxon>
    </lineage>
</organism>
<dbReference type="EC" id="2.1.1.33" evidence="2"/>
<dbReference type="EMBL" id="CP000783">
    <property type="protein sequence ID" value="ABU75630.1"/>
    <property type="molecule type" value="Genomic_DNA"/>
</dbReference>
<dbReference type="RefSeq" id="WP_012123788.1">
    <property type="nucleotide sequence ID" value="NC_009778.1"/>
</dbReference>
<dbReference type="SMR" id="A7MLY2"/>
<dbReference type="GeneID" id="56733285"/>
<dbReference type="KEGG" id="esa:ESA_00331"/>
<dbReference type="HOGENOM" id="CLU_050910_0_1_6"/>
<dbReference type="UniPathway" id="UPA00989"/>
<dbReference type="Proteomes" id="UP000000260">
    <property type="component" value="Chromosome"/>
</dbReference>
<dbReference type="GO" id="GO:0043527">
    <property type="term" value="C:tRNA methyltransferase complex"/>
    <property type="evidence" value="ECO:0007669"/>
    <property type="project" value="TreeGrafter"/>
</dbReference>
<dbReference type="GO" id="GO:0008176">
    <property type="term" value="F:tRNA (guanine(46)-N7)-methyltransferase activity"/>
    <property type="evidence" value="ECO:0007669"/>
    <property type="project" value="UniProtKB-UniRule"/>
</dbReference>
<dbReference type="FunFam" id="3.40.50.150:FF:000024">
    <property type="entry name" value="tRNA (guanine-N(7)-)-methyltransferase"/>
    <property type="match status" value="1"/>
</dbReference>
<dbReference type="Gene3D" id="3.40.50.150">
    <property type="entry name" value="Vaccinia Virus protein VP39"/>
    <property type="match status" value="1"/>
</dbReference>
<dbReference type="HAMAP" id="MF_01057">
    <property type="entry name" value="tRNA_methyltr_TrmB"/>
    <property type="match status" value="1"/>
</dbReference>
<dbReference type="InterPro" id="IPR029063">
    <property type="entry name" value="SAM-dependent_MTases_sf"/>
</dbReference>
<dbReference type="InterPro" id="IPR003358">
    <property type="entry name" value="tRNA_(Gua-N-7)_MeTrfase_Trmb"/>
</dbReference>
<dbReference type="InterPro" id="IPR055361">
    <property type="entry name" value="tRNA_methyltr_TrmB_bact"/>
</dbReference>
<dbReference type="NCBIfam" id="TIGR00091">
    <property type="entry name" value="tRNA (guanosine(46)-N7)-methyltransferase TrmB"/>
    <property type="match status" value="1"/>
</dbReference>
<dbReference type="PANTHER" id="PTHR23417">
    <property type="entry name" value="3-DEOXY-D-MANNO-OCTULOSONIC-ACID TRANSFERASE/TRNA GUANINE-N 7 - -METHYLTRANSFERASE"/>
    <property type="match status" value="1"/>
</dbReference>
<dbReference type="PANTHER" id="PTHR23417:SF14">
    <property type="entry name" value="PENTACOTRIPEPTIDE-REPEAT REGION OF PRORP DOMAIN-CONTAINING PROTEIN"/>
    <property type="match status" value="1"/>
</dbReference>
<dbReference type="Pfam" id="PF02390">
    <property type="entry name" value="Methyltransf_4"/>
    <property type="match status" value="1"/>
</dbReference>
<dbReference type="SUPFAM" id="SSF53335">
    <property type="entry name" value="S-adenosyl-L-methionine-dependent methyltransferases"/>
    <property type="match status" value="1"/>
</dbReference>
<dbReference type="PROSITE" id="PS51625">
    <property type="entry name" value="SAM_MT_TRMB"/>
    <property type="match status" value="1"/>
</dbReference>
<reference key="1">
    <citation type="journal article" date="2010" name="PLoS ONE">
        <title>Genome sequence of Cronobacter sakazakii BAA-894 and comparative genomic hybridization analysis with other Cronobacter species.</title>
        <authorList>
            <person name="Kucerova E."/>
            <person name="Clifton S.W."/>
            <person name="Xia X.Q."/>
            <person name="Long F."/>
            <person name="Porwollik S."/>
            <person name="Fulton L."/>
            <person name="Fronick C."/>
            <person name="Minx P."/>
            <person name="Kyung K."/>
            <person name="Warren W."/>
            <person name="Fulton R."/>
            <person name="Feng D."/>
            <person name="Wollam A."/>
            <person name="Shah N."/>
            <person name="Bhonagiri V."/>
            <person name="Nash W.E."/>
            <person name="Hallsworth-Pepin K."/>
            <person name="Wilson R.K."/>
            <person name="McClelland M."/>
            <person name="Forsythe S.J."/>
        </authorList>
    </citation>
    <scope>NUCLEOTIDE SEQUENCE [LARGE SCALE GENOMIC DNA]</scope>
    <source>
        <strain>ATCC BAA-894</strain>
    </source>
</reference>
<feature type="chain" id="PRO_1000064393" description="tRNA (guanine-N(7)-)-methyltransferase">
    <location>
        <begin position="1"/>
        <end position="239"/>
    </location>
</feature>
<feature type="region of interest" description="Interaction with RNA" evidence="2">
    <location>
        <begin position="150"/>
        <end position="155"/>
    </location>
</feature>
<feature type="active site" evidence="1">
    <location>
        <position position="144"/>
    </location>
</feature>
<feature type="binding site" evidence="2">
    <location>
        <position position="69"/>
    </location>
    <ligand>
        <name>S-adenosyl-L-methionine</name>
        <dbReference type="ChEBI" id="CHEBI:59789"/>
    </ligand>
</feature>
<feature type="binding site" evidence="2">
    <location>
        <position position="94"/>
    </location>
    <ligand>
        <name>S-adenosyl-L-methionine</name>
        <dbReference type="ChEBI" id="CHEBI:59789"/>
    </ligand>
</feature>
<feature type="binding site" evidence="2">
    <location>
        <position position="121"/>
    </location>
    <ligand>
        <name>S-adenosyl-L-methionine</name>
        <dbReference type="ChEBI" id="CHEBI:59789"/>
    </ligand>
</feature>
<feature type="binding site" evidence="2">
    <location>
        <position position="144"/>
    </location>
    <ligand>
        <name>S-adenosyl-L-methionine</name>
        <dbReference type="ChEBI" id="CHEBI:59789"/>
    </ligand>
</feature>
<feature type="binding site" evidence="2">
    <location>
        <position position="148"/>
    </location>
    <ligand>
        <name>substrate</name>
    </ligand>
</feature>
<feature type="binding site" evidence="2">
    <location>
        <position position="180"/>
    </location>
    <ligand>
        <name>substrate</name>
    </ligand>
</feature>
<feature type="binding site" evidence="2">
    <location>
        <begin position="217"/>
        <end position="220"/>
    </location>
    <ligand>
        <name>substrate</name>
    </ligand>
</feature>
<comment type="function">
    <text evidence="2">Catalyzes the formation of N(7)-methylguanine at position 46 (m7G46) in tRNA.</text>
</comment>
<comment type="catalytic activity">
    <reaction evidence="2">
        <text>guanosine(46) in tRNA + S-adenosyl-L-methionine = N(7)-methylguanosine(46) in tRNA + S-adenosyl-L-homocysteine</text>
        <dbReference type="Rhea" id="RHEA:42708"/>
        <dbReference type="Rhea" id="RHEA-COMP:10188"/>
        <dbReference type="Rhea" id="RHEA-COMP:10189"/>
        <dbReference type="ChEBI" id="CHEBI:57856"/>
        <dbReference type="ChEBI" id="CHEBI:59789"/>
        <dbReference type="ChEBI" id="CHEBI:74269"/>
        <dbReference type="ChEBI" id="CHEBI:74480"/>
        <dbReference type="EC" id="2.1.1.33"/>
    </reaction>
</comment>
<comment type="pathway">
    <text evidence="2">tRNA modification; N(7)-methylguanine-tRNA biosynthesis.</text>
</comment>
<comment type="subunit">
    <text evidence="2">Monomer.</text>
</comment>
<comment type="similarity">
    <text evidence="2">Belongs to the class I-like SAM-binding methyltransferase superfamily. TrmB family.</text>
</comment>
<sequence length="239" mass="27184">MNNDVISPEFDENGRPLRRIRSFVRRQGRLTKGQQHALDHYWPVMGVEYRAEPLDLVALFGRDAPVTLEIGFGMGSSLVEMAKTNPQQNFLGIEVHSPGVGACLSAAHEEGVENLRVMCHDAVEVLEKMIPDGSLHMVQLFFPDPWHKARHNKRRIVQVPFAQLVLRKLQPGGVFHMATDWEPYAEHMLEVMSSVEGYENLSPTQDYVPRPASRPVTKFEQRGHRLGHGVWDLMFGRVK</sequence>
<evidence type="ECO:0000250" key="1"/>
<evidence type="ECO:0000255" key="2">
    <source>
        <dbReference type="HAMAP-Rule" id="MF_01057"/>
    </source>
</evidence>
<accession>A7MLY2</accession>
<name>TRMB_CROS8</name>
<protein>
    <recommendedName>
        <fullName evidence="2">tRNA (guanine-N(7)-)-methyltransferase</fullName>
        <ecNumber evidence="2">2.1.1.33</ecNumber>
    </recommendedName>
    <alternativeName>
        <fullName evidence="2">tRNA (guanine(46)-N(7))-methyltransferase</fullName>
    </alternativeName>
    <alternativeName>
        <fullName evidence="2">tRNA(m7G46)-methyltransferase</fullName>
    </alternativeName>
</protein>
<gene>
    <name evidence="2" type="primary">trmB</name>
    <name type="ordered locus">ESA_00331</name>
</gene>